<reference key="1">
    <citation type="submission" date="2001-05" db="EMBL/GenBank/DDBJ databases">
        <title>An analysis of forty genes encoding electron transport proteins from Synechococcus sp. PCC 7002: a comparative study of electron transport proteins from cyanobacteria and chloroplasts.</title>
        <authorList>
            <person name="Nomura C.T."/>
            <person name="Persson S."/>
            <person name="Zhao J."/>
            <person name="Bryant D.A."/>
        </authorList>
    </citation>
    <scope>NUCLEOTIDE SEQUENCE [GENOMIC DNA]</scope>
</reference>
<reference key="2">
    <citation type="submission" date="2008-02" db="EMBL/GenBank/DDBJ databases">
        <title>Complete sequence of Synechococcus sp. PCC 7002.</title>
        <authorList>
            <person name="Li T."/>
            <person name="Zhao J."/>
            <person name="Zhao C."/>
            <person name="Liu Z."/>
            <person name="Zhao F."/>
            <person name="Marquardt J."/>
            <person name="Nomura C.T."/>
            <person name="Persson S."/>
            <person name="Detter J.C."/>
            <person name="Richardson P.M."/>
            <person name="Lanz C."/>
            <person name="Schuster S.C."/>
            <person name="Wang J."/>
            <person name="Li S."/>
            <person name="Huang X."/>
            <person name="Cai T."/>
            <person name="Yu Z."/>
            <person name="Luo J."/>
            <person name="Zhao J."/>
            <person name="Bryant D.A."/>
        </authorList>
    </citation>
    <scope>NUCLEOTIDE SEQUENCE [LARGE SCALE GENOMIC DNA]</scope>
    <source>
        <strain>ATCC 27264 / PCC 7002 / PR-6</strain>
    </source>
</reference>
<keyword id="KW-0028">Amino-acid biosynthesis</keyword>
<keyword id="KW-0057">Aromatic amino acid biosynthesis</keyword>
<keyword id="KW-0456">Lyase</keyword>
<keyword id="KW-1185">Reference proteome</keyword>
<keyword id="KW-0822">Tryptophan biosynthesis</keyword>
<proteinExistence type="inferred from homology"/>
<name>TRPA_PICP2</name>
<accession>Q8KX32</accession>
<accession>B1XPU1</accession>
<feature type="chain" id="PRO_0000098860" description="Tryptophan synthase alpha chain">
    <location>
        <begin position="1"/>
        <end position="264"/>
    </location>
</feature>
<feature type="active site" description="Proton acceptor" evidence="1">
    <location>
        <position position="49"/>
    </location>
</feature>
<feature type="active site" description="Proton acceptor" evidence="1">
    <location>
        <position position="60"/>
    </location>
</feature>
<gene>
    <name evidence="1" type="primary">trpA</name>
    <name type="ordered locus">SYNPCC7002_A0562</name>
</gene>
<dbReference type="EC" id="4.2.1.20" evidence="1"/>
<dbReference type="EMBL" id="AF381042">
    <property type="protein sequence ID" value="AAN03561.1"/>
    <property type="molecule type" value="Genomic_DNA"/>
</dbReference>
<dbReference type="EMBL" id="CP000951">
    <property type="protein sequence ID" value="ACA98569.1"/>
    <property type="molecule type" value="Genomic_DNA"/>
</dbReference>
<dbReference type="RefSeq" id="WP_012306193.1">
    <property type="nucleotide sequence ID" value="NZ_JAHHPU010000001.1"/>
</dbReference>
<dbReference type="SMR" id="Q8KX32"/>
<dbReference type="STRING" id="32049.SYNPCC7002_A0562"/>
<dbReference type="KEGG" id="syp:SYNPCC7002_A0562"/>
<dbReference type="eggNOG" id="COG0159">
    <property type="taxonomic scope" value="Bacteria"/>
</dbReference>
<dbReference type="HOGENOM" id="CLU_016734_0_2_3"/>
<dbReference type="UniPathway" id="UPA00035">
    <property type="reaction ID" value="UER00044"/>
</dbReference>
<dbReference type="Proteomes" id="UP000001688">
    <property type="component" value="Chromosome"/>
</dbReference>
<dbReference type="GO" id="GO:0005829">
    <property type="term" value="C:cytosol"/>
    <property type="evidence" value="ECO:0007669"/>
    <property type="project" value="TreeGrafter"/>
</dbReference>
<dbReference type="GO" id="GO:0004834">
    <property type="term" value="F:tryptophan synthase activity"/>
    <property type="evidence" value="ECO:0007669"/>
    <property type="project" value="UniProtKB-UniRule"/>
</dbReference>
<dbReference type="CDD" id="cd04724">
    <property type="entry name" value="Tryptophan_synthase_alpha"/>
    <property type="match status" value="1"/>
</dbReference>
<dbReference type="FunFam" id="3.20.20.70:FF:000107">
    <property type="entry name" value="Tryptophan synthase alpha chain, chloroplastic"/>
    <property type="match status" value="1"/>
</dbReference>
<dbReference type="Gene3D" id="3.20.20.70">
    <property type="entry name" value="Aldolase class I"/>
    <property type="match status" value="1"/>
</dbReference>
<dbReference type="HAMAP" id="MF_00131">
    <property type="entry name" value="Trp_synth_alpha"/>
    <property type="match status" value="1"/>
</dbReference>
<dbReference type="InterPro" id="IPR013785">
    <property type="entry name" value="Aldolase_TIM"/>
</dbReference>
<dbReference type="InterPro" id="IPR011060">
    <property type="entry name" value="RibuloseP-bd_barrel"/>
</dbReference>
<dbReference type="InterPro" id="IPR018204">
    <property type="entry name" value="Trp_synthase_alpha_AS"/>
</dbReference>
<dbReference type="InterPro" id="IPR002028">
    <property type="entry name" value="Trp_synthase_suA"/>
</dbReference>
<dbReference type="NCBIfam" id="TIGR00262">
    <property type="entry name" value="trpA"/>
    <property type="match status" value="1"/>
</dbReference>
<dbReference type="PANTHER" id="PTHR43406:SF1">
    <property type="entry name" value="TRYPTOPHAN SYNTHASE ALPHA CHAIN, CHLOROPLASTIC"/>
    <property type="match status" value="1"/>
</dbReference>
<dbReference type="PANTHER" id="PTHR43406">
    <property type="entry name" value="TRYPTOPHAN SYNTHASE, ALPHA CHAIN"/>
    <property type="match status" value="1"/>
</dbReference>
<dbReference type="Pfam" id="PF00290">
    <property type="entry name" value="Trp_syntA"/>
    <property type="match status" value="1"/>
</dbReference>
<dbReference type="SUPFAM" id="SSF51366">
    <property type="entry name" value="Ribulose-phoshate binding barrel"/>
    <property type="match status" value="1"/>
</dbReference>
<dbReference type="PROSITE" id="PS00167">
    <property type="entry name" value="TRP_SYNTHASE_ALPHA"/>
    <property type="match status" value="1"/>
</dbReference>
<sequence length="264" mass="27697">MTSVSERFRSLKQAGQCALIPFITAGDPDLETTEQALKILDAAGADFIELGVPYSDPLADGPTIQAAATRALSRGVTLEQVLAIVQRVHGQLTAPIILFTYYNPIFYRGIDAFMAQVAAAGVKGLVIPDLPLEESQMVLDAATSHGLDLILLVAPTSPTERIEAIAKASQGFIYLVSVTGVTGARTSVASRVGELLPKLRQVTDKPIGVGFGVSDPAQARQLKEWGADGVIVGSAVVKRLATGTPAEGLAAVKEFCESLKEAIA</sequence>
<evidence type="ECO:0000255" key="1">
    <source>
        <dbReference type="HAMAP-Rule" id="MF_00131"/>
    </source>
</evidence>
<protein>
    <recommendedName>
        <fullName evidence="1">Tryptophan synthase alpha chain</fullName>
        <ecNumber evidence="1">4.2.1.20</ecNumber>
    </recommendedName>
</protein>
<organism>
    <name type="scientific">Picosynechococcus sp. (strain ATCC 27264 / PCC 7002 / PR-6)</name>
    <name type="common">Agmenellum quadruplicatum</name>
    <dbReference type="NCBI Taxonomy" id="32049"/>
    <lineage>
        <taxon>Bacteria</taxon>
        <taxon>Bacillati</taxon>
        <taxon>Cyanobacteriota</taxon>
        <taxon>Cyanophyceae</taxon>
        <taxon>Oscillatoriophycideae</taxon>
        <taxon>Chroococcales</taxon>
        <taxon>Geminocystaceae</taxon>
        <taxon>Picosynechococcus</taxon>
    </lineage>
</organism>
<comment type="function">
    <text evidence="1">The alpha subunit is responsible for the aldol cleavage of indoleglycerol phosphate to indole and glyceraldehyde 3-phosphate.</text>
</comment>
<comment type="catalytic activity">
    <reaction evidence="1">
        <text>(1S,2R)-1-C-(indol-3-yl)glycerol 3-phosphate + L-serine = D-glyceraldehyde 3-phosphate + L-tryptophan + H2O</text>
        <dbReference type="Rhea" id="RHEA:10532"/>
        <dbReference type="ChEBI" id="CHEBI:15377"/>
        <dbReference type="ChEBI" id="CHEBI:33384"/>
        <dbReference type="ChEBI" id="CHEBI:57912"/>
        <dbReference type="ChEBI" id="CHEBI:58866"/>
        <dbReference type="ChEBI" id="CHEBI:59776"/>
        <dbReference type="EC" id="4.2.1.20"/>
    </reaction>
</comment>
<comment type="pathway">
    <text evidence="1">Amino-acid biosynthesis; L-tryptophan biosynthesis; L-tryptophan from chorismate: step 5/5.</text>
</comment>
<comment type="subunit">
    <text evidence="1">Tetramer of two alpha and two beta chains.</text>
</comment>
<comment type="similarity">
    <text evidence="1">Belongs to the TrpA family.</text>
</comment>